<comment type="function">
    <text evidence="1">Has a role in spore morphogenesis. Involved in the assembly of the forespore membrane.</text>
</comment>
<comment type="subcellular location">
    <subcellularLocation>
        <location evidence="1">Prospore membrane</location>
        <topology evidence="1">Peripheral membrane protein</topology>
    </subcellularLocation>
    <text>Associated with forespore membrane.</text>
</comment>
<reference key="1">
    <citation type="journal article" date="2001" name="Mol. Biol. Cell">
        <title>The Schizosaccharomyces pombe spo3+ gene is required for assembly of the forespore membrane and genetically interacts with psy1(+)-encoding syntaxin-like protein.</title>
        <authorList>
            <person name="Nakamura T."/>
            <person name="Nakamura-Kubo M."/>
            <person name="Hirata A."/>
            <person name="Shimoda C."/>
        </authorList>
    </citation>
    <scope>NUCLEOTIDE SEQUENCE [GENOMIC DNA]</scope>
    <scope>FUNCTION</scope>
    <scope>SUBCELLULAR LOCATION</scope>
</reference>
<reference key="2">
    <citation type="journal article" date="2002" name="Nature">
        <title>The genome sequence of Schizosaccharomyces pombe.</title>
        <authorList>
            <person name="Wood V."/>
            <person name="Gwilliam R."/>
            <person name="Rajandream M.A."/>
            <person name="Lyne M.H."/>
            <person name="Lyne R."/>
            <person name="Stewart A."/>
            <person name="Sgouros J.G."/>
            <person name="Peat N."/>
            <person name="Hayles J."/>
            <person name="Baker S.G."/>
            <person name="Basham D."/>
            <person name="Bowman S."/>
            <person name="Brooks K."/>
            <person name="Brown D."/>
            <person name="Brown S."/>
            <person name="Chillingworth T."/>
            <person name="Churcher C.M."/>
            <person name="Collins M."/>
            <person name="Connor R."/>
            <person name="Cronin A."/>
            <person name="Davis P."/>
            <person name="Feltwell T."/>
            <person name="Fraser A."/>
            <person name="Gentles S."/>
            <person name="Goble A."/>
            <person name="Hamlin N."/>
            <person name="Harris D.E."/>
            <person name="Hidalgo J."/>
            <person name="Hodgson G."/>
            <person name="Holroyd S."/>
            <person name="Hornsby T."/>
            <person name="Howarth S."/>
            <person name="Huckle E.J."/>
            <person name="Hunt S."/>
            <person name="Jagels K."/>
            <person name="James K.D."/>
            <person name="Jones L."/>
            <person name="Jones M."/>
            <person name="Leather S."/>
            <person name="McDonald S."/>
            <person name="McLean J."/>
            <person name="Mooney P."/>
            <person name="Moule S."/>
            <person name="Mungall K.L."/>
            <person name="Murphy L.D."/>
            <person name="Niblett D."/>
            <person name="Odell C."/>
            <person name="Oliver K."/>
            <person name="O'Neil S."/>
            <person name="Pearson D."/>
            <person name="Quail M.A."/>
            <person name="Rabbinowitsch E."/>
            <person name="Rutherford K.M."/>
            <person name="Rutter S."/>
            <person name="Saunders D."/>
            <person name="Seeger K."/>
            <person name="Sharp S."/>
            <person name="Skelton J."/>
            <person name="Simmonds M.N."/>
            <person name="Squares R."/>
            <person name="Squares S."/>
            <person name="Stevens K."/>
            <person name="Taylor K."/>
            <person name="Taylor R.G."/>
            <person name="Tivey A."/>
            <person name="Walsh S.V."/>
            <person name="Warren T."/>
            <person name="Whitehead S."/>
            <person name="Woodward J.R."/>
            <person name="Volckaert G."/>
            <person name="Aert R."/>
            <person name="Robben J."/>
            <person name="Grymonprez B."/>
            <person name="Weltjens I."/>
            <person name="Vanstreels E."/>
            <person name="Rieger M."/>
            <person name="Schaefer M."/>
            <person name="Mueller-Auer S."/>
            <person name="Gabel C."/>
            <person name="Fuchs M."/>
            <person name="Duesterhoeft A."/>
            <person name="Fritzc C."/>
            <person name="Holzer E."/>
            <person name="Moestl D."/>
            <person name="Hilbert H."/>
            <person name="Borzym K."/>
            <person name="Langer I."/>
            <person name="Beck A."/>
            <person name="Lehrach H."/>
            <person name="Reinhardt R."/>
            <person name="Pohl T.M."/>
            <person name="Eger P."/>
            <person name="Zimmermann W."/>
            <person name="Wedler H."/>
            <person name="Wambutt R."/>
            <person name="Purnelle B."/>
            <person name="Goffeau A."/>
            <person name="Cadieu E."/>
            <person name="Dreano S."/>
            <person name="Gloux S."/>
            <person name="Lelaure V."/>
            <person name="Mottier S."/>
            <person name="Galibert F."/>
            <person name="Aves S.J."/>
            <person name="Xiang Z."/>
            <person name="Hunt C."/>
            <person name="Moore K."/>
            <person name="Hurst S.M."/>
            <person name="Lucas M."/>
            <person name="Rochet M."/>
            <person name="Gaillardin C."/>
            <person name="Tallada V.A."/>
            <person name="Garzon A."/>
            <person name="Thode G."/>
            <person name="Daga R.R."/>
            <person name="Cruzado L."/>
            <person name="Jimenez J."/>
            <person name="Sanchez M."/>
            <person name="del Rey F."/>
            <person name="Benito J."/>
            <person name="Dominguez A."/>
            <person name="Revuelta J.L."/>
            <person name="Moreno S."/>
            <person name="Armstrong J."/>
            <person name="Forsburg S.L."/>
            <person name="Cerutti L."/>
            <person name="Lowe T."/>
            <person name="McCombie W.R."/>
            <person name="Paulsen I."/>
            <person name="Potashkin J."/>
            <person name="Shpakovski G.V."/>
            <person name="Ussery D."/>
            <person name="Barrell B.G."/>
            <person name="Nurse P."/>
        </authorList>
    </citation>
    <scope>NUCLEOTIDE SEQUENCE [LARGE SCALE GENOMIC DNA]</scope>
    <source>
        <strain>972 / ATCC 24843</strain>
    </source>
</reference>
<dbReference type="EMBL" id="CU329670">
    <property type="protein sequence ID" value="CAB63797.1"/>
    <property type="molecule type" value="Genomic_DNA"/>
</dbReference>
<dbReference type="PIR" id="T50230">
    <property type="entry name" value="T50230"/>
</dbReference>
<dbReference type="RefSeq" id="NP_593599.1">
    <property type="nucleotide sequence ID" value="NM_001019030.2"/>
</dbReference>
<dbReference type="BioGRID" id="279938">
    <property type="interactions" value="6"/>
</dbReference>
<dbReference type="STRING" id="284812.Q9US08"/>
<dbReference type="iPTMnet" id="Q9US08"/>
<dbReference type="PaxDb" id="4896-SPAC607.10.1"/>
<dbReference type="EnsemblFungi" id="SPAC607.10.1">
    <property type="protein sequence ID" value="SPAC607.10.1:pep"/>
    <property type="gene ID" value="SPAC607.10"/>
</dbReference>
<dbReference type="GeneID" id="2543520"/>
<dbReference type="KEGG" id="spo:2543520"/>
<dbReference type="PomBase" id="SPAC607.10">
    <property type="gene designation" value="spo3"/>
</dbReference>
<dbReference type="VEuPathDB" id="FungiDB:SPAC607.10"/>
<dbReference type="HOGENOM" id="CLU_298787_0_0_1"/>
<dbReference type="InParanoid" id="Q9US08"/>
<dbReference type="OMA" id="YSADEWK"/>
<dbReference type="PRO" id="PR:Q9US08"/>
<dbReference type="Proteomes" id="UP000002485">
    <property type="component" value="Chromosome I"/>
</dbReference>
<dbReference type="GO" id="GO:0005628">
    <property type="term" value="C:prospore membrane"/>
    <property type="evidence" value="ECO:0000314"/>
    <property type="project" value="PomBase"/>
</dbReference>
<dbReference type="GO" id="GO:0070056">
    <property type="term" value="C:prospore membrane leading edge"/>
    <property type="evidence" value="ECO:0000314"/>
    <property type="project" value="PomBase"/>
</dbReference>
<dbReference type="GO" id="GO:0032120">
    <property type="term" value="P:ascospore-type prospore membrane formation"/>
    <property type="evidence" value="ECO:0000315"/>
    <property type="project" value="PomBase"/>
</dbReference>
<name>SPO3_SCHPO</name>
<accession>Q9US08</accession>
<feature type="chain" id="PRO_0000072138" description="Sporulation-specific protein 3">
    <location>
        <begin position="1"/>
        <end position="1028"/>
    </location>
</feature>
<protein>
    <recommendedName>
        <fullName>Sporulation-specific protein 3</fullName>
    </recommendedName>
</protein>
<keyword id="KW-0472">Membrane</keyword>
<keyword id="KW-1185">Reference proteome</keyword>
<keyword id="KW-0749">Sporulation</keyword>
<gene>
    <name type="primary">spo3</name>
    <name type="ORF">SPAC607.10</name>
</gene>
<evidence type="ECO:0000269" key="1">
    <source>
    </source>
</evidence>
<organism>
    <name type="scientific">Schizosaccharomyces pombe (strain 972 / ATCC 24843)</name>
    <name type="common">Fission yeast</name>
    <dbReference type="NCBI Taxonomy" id="284812"/>
    <lineage>
        <taxon>Eukaryota</taxon>
        <taxon>Fungi</taxon>
        <taxon>Dikarya</taxon>
        <taxon>Ascomycota</taxon>
        <taxon>Taphrinomycotina</taxon>
        <taxon>Schizosaccharomycetes</taxon>
        <taxon>Schizosaccharomycetales</taxon>
        <taxon>Schizosaccharomycetaceae</taxon>
        <taxon>Schizosaccharomyces</taxon>
    </lineage>
</organism>
<proteinExistence type="predicted"/>
<sequence length="1028" mass="119407">MGILSVIRIFIYCLIRLFSFNSRKRNSSIDELERGEINAFACDKQNTPSPNSECRPLTPLNSPFRRTVEGDTANLQAPSPTACPSFDSASSIKSSKEDIACRKLSTERFFYSPNGIDEMKKQQQFKKIPTVSITEVEPAFIPSNMEQALFSEEPFVIQDDLSHQINLDDNRKFSRIQKNKLDPLITVNLVPIVNGENCFNFYETQMETNFLSPEFIKKPSMVDHKRDSEINAVTAVSADGSFSPLTETLSSTISTLSNDSLDGLSSQKNEFTGFNSNSEWIPNDTVDYICNSDASSVVSNLSDFEDCFDQFGVYDKEYEKKIEKTKRNFPKFQSSATYPPFSAHHQARRNNPQGFRNVKKRFQLFKDDCTALTDSDFLDALPFFNARVIIALYVEWRLRVYETMIIKGEESLKNLQRARDGPHNKLWLGVFGNKDTIKKLSNYDRRAISNPYVSNHLNFNVRRVKSDTVYIPTILQLLRSSTQLMTEQAFVASSNLKSTKGLRETRLIQKYKVKGDFEYVYAALYYAAFTQESTLKAVTIDDILSEDELEDWWYLNLRYTSFITPQLCFEFLDKEADSCRDRLTEVKSEPPKAVIYEEPLNKLSRFSSDRLFTSHELVAIAELISLNEPPLESGKKFYYEEFQKACQKKRDDYRYSPEIEFKAAFREKFLQSNEKVPFPRPGEIYEKRCDYFSKYACQNIFISKPLKRSGSIYEVFSDGIGRVIYGSVLDYEATRNNILLHFGFEIHCAPSEEELIEREEAFKDFHNMLSFKYSANEIYEFCGTHSRAEVHKNEVLKRMAYYLIDENKEISILRRILSLRIVEPTTSFTRYEYDLWRTFYPDVLYLNYSKSGRIPTGSPYIMNGQWRKDLCVSTPPMVDINSALFPHWFKLSASNLFAGAEHAGLNRQKPDKIDLDLYEPLPENSYLVAAELRVLRALRHKNPENIPLLEKWEVRALHQLMAKIRKYYTVPTDYLSLRMDGLQAMLRKREYMSCYTFNYFDYACLMDHAYRLYEGFNNQVVNLPPRIM</sequence>